<accession>Q03LX0</accession>
<reference key="1">
    <citation type="journal article" date="2006" name="Proc. Natl. Acad. Sci. U.S.A.">
        <title>Comparative genomics of the lactic acid bacteria.</title>
        <authorList>
            <person name="Makarova K.S."/>
            <person name="Slesarev A."/>
            <person name="Wolf Y.I."/>
            <person name="Sorokin A."/>
            <person name="Mirkin B."/>
            <person name="Koonin E.V."/>
            <person name="Pavlov A."/>
            <person name="Pavlova N."/>
            <person name="Karamychev V."/>
            <person name="Polouchine N."/>
            <person name="Shakhova V."/>
            <person name="Grigoriev I."/>
            <person name="Lou Y."/>
            <person name="Rohksar D."/>
            <person name="Lucas S."/>
            <person name="Huang K."/>
            <person name="Goodstein D.M."/>
            <person name="Hawkins T."/>
            <person name="Plengvidhya V."/>
            <person name="Welker D."/>
            <person name="Hughes J."/>
            <person name="Goh Y."/>
            <person name="Benson A."/>
            <person name="Baldwin K."/>
            <person name="Lee J.-H."/>
            <person name="Diaz-Muniz I."/>
            <person name="Dosti B."/>
            <person name="Smeianov V."/>
            <person name="Wechter W."/>
            <person name="Barabote R."/>
            <person name="Lorca G."/>
            <person name="Altermann E."/>
            <person name="Barrangou R."/>
            <person name="Ganesan B."/>
            <person name="Xie Y."/>
            <person name="Rawsthorne H."/>
            <person name="Tamir D."/>
            <person name="Parker C."/>
            <person name="Breidt F."/>
            <person name="Broadbent J.R."/>
            <person name="Hutkins R."/>
            <person name="O'Sullivan D."/>
            <person name="Steele J."/>
            <person name="Unlu G."/>
            <person name="Saier M.H. Jr."/>
            <person name="Klaenhammer T."/>
            <person name="Richardson P."/>
            <person name="Kozyavkin S."/>
            <person name="Weimer B.C."/>
            <person name="Mills D.A."/>
        </authorList>
    </citation>
    <scope>NUCLEOTIDE SEQUENCE [LARGE SCALE GENOMIC DNA]</scope>
    <source>
        <strain>ATCC BAA-491 / LMD-9</strain>
    </source>
</reference>
<name>EFTU_STRTD</name>
<sequence length="398" mass="43867">MAKEKYDRSKPHVNIGTIGHVDHGKTTLTAAITTVLARRLPSAVNTPKDYASIDAAPEERERGITINTAHVEYETEKRHYAHIDAPGHADYVKNMITGAAQMDGAILVVASTDGPMPQTREHILLSRQVGVKHLIVFMNKVDLVDDEELLELVEMEIRDLLSEYDFPGDDIPVIQGSALKALEGDSKYEDIIMDLMNTVDEYIPEPERDTDKPLLLPVEDVFSITGRGTVASGRIDRGVVRVNDEVEIVGLKEESQKAVVTGVEMFRKQLDEGIAGDNVGVLLRGIQRDEIERGQVLAAPGSIKPHTKFKGEVYILTKEEGGRHTPFFNNYRPQFYFRTTDVTGSIELPAGTEMVMPGDNVTIDVELIHPIAVEKGTTFSIREGGRTVGSGIVTEIEA</sequence>
<proteinExistence type="inferred from homology"/>
<evidence type="ECO:0000250" key="1"/>
<evidence type="ECO:0000255" key="2">
    <source>
        <dbReference type="HAMAP-Rule" id="MF_00118"/>
    </source>
</evidence>
<comment type="function">
    <text evidence="2">GTP hydrolase that promotes the GTP-dependent binding of aminoacyl-tRNA to the A-site of ribosomes during protein biosynthesis.</text>
</comment>
<comment type="catalytic activity">
    <reaction evidence="2">
        <text>GTP + H2O = GDP + phosphate + H(+)</text>
        <dbReference type="Rhea" id="RHEA:19669"/>
        <dbReference type="ChEBI" id="CHEBI:15377"/>
        <dbReference type="ChEBI" id="CHEBI:15378"/>
        <dbReference type="ChEBI" id="CHEBI:37565"/>
        <dbReference type="ChEBI" id="CHEBI:43474"/>
        <dbReference type="ChEBI" id="CHEBI:58189"/>
        <dbReference type="EC" id="3.6.5.3"/>
    </reaction>
    <physiologicalReaction direction="left-to-right" evidence="2">
        <dbReference type="Rhea" id="RHEA:19670"/>
    </physiologicalReaction>
</comment>
<comment type="subunit">
    <text evidence="2">Monomer.</text>
</comment>
<comment type="subcellular location">
    <subcellularLocation>
        <location evidence="2">Cytoplasm</location>
    </subcellularLocation>
</comment>
<comment type="similarity">
    <text evidence="2">Belongs to the TRAFAC class translation factor GTPase superfamily. Classic translation factor GTPase family. EF-Tu/EF-1A subfamily.</text>
</comment>
<protein>
    <recommendedName>
        <fullName evidence="2">Elongation factor Tu</fullName>
        <shortName evidence="2">EF-Tu</shortName>
        <ecNumber evidence="2">3.6.5.3</ecNumber>
    </recommendedName>
</protein>
<feature type="chain" id="PRO_1000015763" description="Elongation factor Tu">
    <location>
        <begin position="1"/>
        <end position="398"/>
    </location>
</feature>
<feature type="domain" description="tr-type G">
    <location>
        <begin position="10"/>
        <end position="207"/>
    </location>
</feature>
<feature type="region of interest" description="G1" evidence="1">
    <location>
        <begin position="19"/>
        <end position="26"/>
    </location>
</feature>
<feature type="region of interest" description="G2" evidence="1">
    <location>
        <begin position="63"/>
        <end position="67"/>
    </location>
</feature>
<feature type="region of interest" description="G3" evidence="1">
    <location>
        <begin position="84"/>
        <end position="87"/>
    </location>
</feature>
<feature type="region of interest" description="G4" evidence="1">
    <location>
        <begin position="139"/>
        <end position="142"/>
    </location>
</feature>
<feature type="region of interest" description="G5" evidence="1">
    <location>
        <begin position="177"/>
        <end position="179"/>
    </location>
</feature>
<feature type="binding site" evidence="2">
    <location>
        <begin position="19"/>
        <end position="26"/>
    </location>
    <ligand>
        <name>GTP</name>
        <dbReference type="ChEBI" id="CHEBI:37565"/>
    </ligand>
</feature>
<feature type="binding site" evidence="2">
    <location>
        <position position="26"/>
    </location>
    <ligand>
        <name>Mg(2+)</name>
        <dbReference type="ChEBI" id="CHEBI:18420"/>
    </ligand>
</feature>
<feature type="binding site" evidence="2">
    <location>
        <begin position="84"/>
        <end position="88"/>
    </location>
    <ligand>
        <name>GTP</name>
        <dbReference type="ChEBI" id="CHEBI:37565"/>
    </ligand>
</feature>
<feature type="binding site" evidence="2">
    <location>
        <begin position="139"/>
        <end position="142"/>
    </location>
    <ligand>
        <name>GTP</name>
        <dbReference type="ChEBI" id="CHEBI:37565"/>
    </ligand>
</feature>
<gene>
    <name evidence="2" type="primary">tuf</name>
    <name type="ordered locus">STER_0524</name>
</gene>
<organism>
    <name type="scientific">Streptococcus thermophilus (strain ATCC BAA-491 / LMD-9)</name>
    <dbReference type="NCBI Taxonomy" id="322159"/>
    <lineage>
        <taxon>Bacteria</taxon>
        <taxon>Bacillati</taxon>
        <taxon>Bacillota</taxon>
        <taxon>Bacilli</taxon>
        <taxon>Lactobacillales</taxon>
        <taxon>Streptococcaceae</taxon>
        <taxon>Streptococcus</taxon>
    </lineage>
</organism>
<dbReference type="EC" id="3.6.5.3" evidence="2"/>
<dbReference type="EMBL" id="CP000419">
    <property type="protein sequence ID" value="ABJ65802.1"/>
    <property type="molecule type" value="Genomic_DNA"/>
</dbReference>
<dbReference type="RefSeq" id="WP_002949971.1">
    <property type="nucleotide sequence ID" value="NC_008532.1"/>
</dbReference>
<dbReference type="SMR" id="Q03LX0"/>
<dbReference type="GeneID" id="66898397"/>
<dbReference type="KEGG" id="ste:STER_0524"/>
<dbReference type="HOGENOM" id="CLU_007265_0_1_9"/>
<dbReference type="GO" id="GO:0005829">
    <property type="term" value="C:cytosol"/>
    <property type="evidence" value="ECO:0007669"/>
    <property type="project" value="TreeGrafter"/>
</dbReference>
<dbReference type="GO" id="GO:0005525">
    <property type="term" value="F:GTP binding"/>
    <property type="evidence" value="ECO:0007669"/>
    <property type="project" value="UniProtKB-UniRule"/>
</dbReference>
<dbReference type="GO" id="GO:0003924">
    <property type="term" value="F:GTPase activity"/>
    <property type="evidence" value="ECO:0007669"/>
    <property type="project" value="InterPro"/>
</dbReference>
<dbReference type="GO" id="GO:0003746">
    <property type="term" value="F:translation elongation factor activity"/>
    <property type="evidence" value="ECO:0007669"/>
    <property type="project" value="UniProtKB-UniRule"/>
</dbReference>
<dbReference type="CDD" id="cd01884">
    <property type="entry name" value="EF_Tu"/>
    <property type="match status" value="1"/>
</dbReference>
<dbReference type="CDD" id="cd03697">
    <property type="entry name" value="EFTU_II"/>
    <property type="match status" value="1"/>
</dbReference>
<dbReference type="CDD" id="cd03707">
    <property type="entry name" value="EFTU_III"/>
    <property type="match status" value="1"/>
</dbReference>
<dbReference type="FunFam" id="2.40.30.10:FF:000001">
    <property type="entry name" value="Elongation factor Tu"/>
    <property type="match status" value="1"/>
</dbReference>
<dbReference type="FunFam" id="3.40.50.300:FF:000003">
    <property type="entry name" value="Elongation factor Tu"/>
    <property type="match status" value="1"/>
</dbReference>
<dbReference type="Gene3D" id="3.40.50.300">
    <property type="entry name" value="P-loop containing nucleotide triphosphate hydrolases"/>
    <property type="match status" value="1"/>
</dbReference>
<dbReference type="Gene3D" id="2.40.30.10">
    <property type="entry name" value="Translation factors"/>
    <property type="match status" value="2"/>
</dbReference>
<dbReference type="HAMAP" id="MF_00118_B">
    <property type="entry name" value="EF_Tu_B"/>
    <property type="match status" value="1"/>
</dbReference>
<dbReference type="InterPro" id="IPR041709">
    <property type="entry name" value="EF-Tu_GTP-bd"/>
</dbReference>
<dbReference type="InterPro" id="IPR050055">
    <property type="entry name" value="EF-Tu_GTPase"/>
</dbReference>
<dbReference type="InterPro" id="IPR004161">
    <property type="entry name" value="EFTu-like_2"/>
</dbReference>
<dbReference type="InterPro" id="IPR033720">
    <property type="entry name" value="EFTU_2"/>
</dbReference>
<dbReference type="InterPro" id="IPR031157">
    <property type="entry name" value="G_TR_CS"/>
</dbReference>
<dbReference type="InterPro" id="IPR027417">
    <property type="entry name" value="P-loop_NTPase"/>
</dbReference>
<dbReference type="InterPro" id="IPR005225">
    <property type="entry name" value="Small_GTP-bd"/>
</dbReference>
<dbReference type="InterPro" id="IPR000795">
    <property type="entry name" value="T_Tr_GTP-bd_dom"/>
</dbReference>
<dbReference type="InterPro" id="IPR009000">
    <property type="entry name" value="Transl_B-barrel_sf"/>
</dbReference>
<dbReference type="InterPro" id="IPR009001">
    <property type="entry name" value="Transl_elong_EF1A/Init_IF2_C"/>
</dbReference>
<dbReference type="InterPro" id="IPR004541">
    <property type="entry name" value="Transl_elong_EFTu/EF1A_bac/org"/>
</dbReference>
<dbReference type="InterPro" id="IPR004160">
    <property type="entry name" value="Transl_elong_EFTu/EF1A_C"/>
</dbReference>
<dbReference type="NCBIfam" id="TIGR00485">
    <property type="entry name" value="EF-Tu"/>
    <property type="match status" value="1"/>
</dbReference>
<dbReference type="NCBIfam" id="NF000766">
    <property type="entry name" value="PRK00049.1"/>
    <property type="match status" value="1"/>
</dbReference>
<dbReference type="NCBIfam" id="NF009372">
    <property type="entry name" value="PRK12735.1"/>
    <property type="match status" value="1"/>
</dbReference>
<dbReference type="NCBIfam" id="NF009373">
    <property type="entry name" value="PRK12736.1"/>
    <property type="match status" value="1"/>
</dbReference>
<dbReference type="NCBIfam" id="TIGR00231">
    <property type="entry name" value="small_GTP"/>
    <property type="match status" value="1"/>
</dbReference>
<dbReference type="PANTHER" id="PTHR43721:SF22">
    <property type="entry name" value="ELONGATION FACTOR TU, MITOCHONDRIAL"/>
    <property type="match status" value="1"/>
</dbReference>
<dbReference type="PANTHER" id="PTHR43721">
    <property type="entry name" value="ELONGATION FACTOR TU-RELATED"/>
    <property type="match status" value="1"/>
</dbReference>
<dbReference type="Pfam" id="PF00009">
    <property type="entry name" value="GTP_EFTU"/>
    <property type="match status" value="1"/>
</dbReference>
<dbReference type="Pfam" id="PF03144">
    <property type="entry name" value="GTP_EFTU_D2"/>
    <property type="match status" value="1"/>
</dbReference>
<dbReference type="Pfam" id="PF03143">
    <property type="entry name" value="GTP_EFTU_D3"/>
    <property type="match status" value="1"/>
</dbReference>
<dbReference type="PRINTS" id="PR00315">
    <property type="entry name" value="ELONGATNFCT"/>
</dbReference>
<dbReference type="SUPFAM" id="SSF50465">
    <property type="entry name" value="EF-Tu/eEF-1alpha/eIF2-gamma C-terminal domain"/>
    <property type="match status" value="1"/>
</dbReference>
<dbReference type="SUPFAM" id="SSF52540">
    <property type="entry name" value="P-loop containing nucleoside triphosphate hydrolases"/>
    <property type="match status" value="1"/>
</dbReference>
<dbReference type="SUPFAM" id="SSF50447">
    <property type="entry name" value="Translation proteins"/>
    <property type="match status" value="1"/>
</dbReference>
<dbReference type="PROSITE" id="PS00301">
    <property type="entry name" value="G_TR_1"/>
    <property type="match status" value="1"/>
</dbReference>
<dbReference type="PROSITE" id="PS51722">
    <property type="entry name" value="G_TR_2"/>
    <property type="match status" value="1"/>
</dbReference>
<keyword id="KW-0963">Cytoplasm</keyword>
<keyword id="KW-0251">Elongation factor</keyword>
<keyword id="KW-0342">GTP-binding</keyword>
<keyword id="KW-0378">Hydrolase</keyword>
<keyword id="KW-0460">Magnesium</keyword>
<keyword id="KW-0479">Metal-binding</keyword>
<keyword id="KW-0547">Nucleotide-binding</keyword>
<keyword id="KW-0648">Protein biosynthesis</keyword>